<sequence length="61" mass="7280">MAKKSMIAKQKRTPKFKVRAYTRCERCGRPHSVYRKFKLCRICFRELAYKGQLPGIKKASW</sequence>
<protein>
    <recommendedName>
        <fullName evidence="1">Small ribosomal subunit protein uS14</fullName>
    </recommendedName>
    <alternativeName>
        <fullName evidence="2">30S ribosomal protein S14 type Z</fullName>
    </alternativeName>
</protein>
<proteinExistence type="inferred from homology"/>
<accession>Q5L410</accession>
<gene>
    <name evidence="1" type="primary">rpsZ</name>
    <name evidence="1" type="synonym">rpsN</name>
    <name type="ordered locus">GK0119</name>
</gene>
<organism>
    <name type="scientific">Geobacillus kaustophilus (strain HTA426)</name>
    <dbReference type="NCBI Taxonomy" id="235909"/>
    <lineage>
        <taxon>Bacteria</taxon>
        <taxon>Bacillati</taxon>
        <taxon>Bacillota</taxon>
        <taxon>Bacilli</taxon>
        <taxon>Bacillales</taxon>
        <taxon>Anoxybacillaceae</taxon>
        <taxon>Geobacillus</taxon>
        <taxon>Geobacillus thermoleovorans group</taxon>
    </lineage>
</organism>
<dbReference type="EMBL" id="BA000043">
    <property type="protein sequence ID" value="BAD74404.1"/>
    <property type="molecule type" value="Genomic_DNA"/>
</dbReference>
<dbReference type="RefSeq" id="WP_003247599.1">
    <property type="nucleotide sequence ID" value="NC_006510.1"/>
</dbReference>
<dbReference type="SMR" id="Q5L410"/>
<dbReference type="STRING" id="235909.GK0119"/>
<dbReference type="KEGG" id="gka:GK0119"/>
<dbReference type="eggNOG" id="COG0199">
    <property type="taxonomic scope" value="Bacteria"/>
</dbReference>
<dbReference type="HOGENOM" id="CLU_139869_3_0_9"/>
<dbReference type="Proteomes" id="UP000001172">
    <property type="component" value="Chromosome"/>
</dbReference>
<dbReference type="GO" id="GO:0015935">
    <property type="term" value="C:small ribosomal subunit"/>
    <property type="evidence" value="ECO:0007669"/>
    <property type="project" value="TreeGrafter"/>
</dbReference>
<dbReference type="GO" id="GO:0019843">
    <property type="term" value="F:rRNA binding"/>
    <property type="evidence" value="ECO:0007669"/>
    <property type="project" value="UniProtKB-UniRule"/>
</dbReference>
<dbReference type="GO" id="GO:0003735">
    <property type="term" value="F:structural constituent of ribosome"/>
    <property type="evidence" value="ECO:0007669"/>
    <property type="project" value="InterPro"/>
</dbReference>
<dbReference type="GO" id="GO:0008270">
    <property type="term" value="F:zinc ion binding"/>
    <property type="evidence" value="ECO:0007669"/>
    <property type="project" value="UniProtKB-UniRule"/>
</dbReference>
<dbReference type="GO" id="GO:0006412">
    <property type="term" value="P:translation"/>
    <property type="evidence" value="ECO:0007669"/>
    <property type="project" value="UniProtKB-UniRule"/>
</dbReference>
<dbReference type="FunFam" id="4.10.830.10:FF:000001">
    <property type="entry name" value="30S ribosomal protein S14 type Z"/>
    <property type="match status" value="1"/>
</dbReference>
<dbReference type="Gene3D" id="4.10.830.10">
    <property type="entry name" value="30s Ribosomal Protein S14, Chain N"/>
    <property type="match status" value="1"/>
</dbReference>
<dbReference type="HAMAP" id="MF_01364_B">
    <property type="entry name" value="Ribosomal_uS14_2_B"/>
    <property type="match status" value="1"/>
</dbReference>
<dbReference type="InterPro" id="IPR001209">
    <property type="entry name" value="Ribosomal_uS14"/>
</dbReference>
<dbReference type="InterPro" id="IPR023053">
    <property type="entry name" value="Ribosomal_uS14_bact"/>
</dbReference>
<dbReference type="InterPro" id="IPR018271">
    <property type="entry name" value="Ribosomal_uS14_CS"/>
</dbReference>
<dbReference type="InterPro" id="IPR043140">
    <property type="entry name" value="Ribosomal_uS14_sf"/>
</dbReference>
<dbReference type="NCBIfam" id="NF005974">
    <property type="entry name" value="PRK08061.1"/>
    <property type="match status" value="1"/>
</dbReference>
<dbReference type="PANTHER" id="PTHR19836">
    <property type="entry name" value="30S RIBOSOMAL PROTEIN S14"/>
    <property type="match status" value="1"/>
</dbReference>
<dbReference type="PANTHER" id="PTHR19836:SF26">
    <property type="entry name" value="SMALL RIBOSOMAL SUBUNIT PROTEIN US14B"/>
    <property type="match status" value="1"/>
</dbReference>
<dbReference type="Pfam" id="PF00253">
    <property type="entry name" value="Ribosomal_S14"/>
    <property type="match status" value="1"/>
</dbReference>
<dbReference type="SUPFAM" id="SSF57716">
    <property type="entry name" value="Glucocorticoid receptor-like (DNA-binding domain)"/>
    <property type="match status" value="1"/>
</dbReference>
<dbReference type="PROSITE" id="PS00527">
    <property type="entry name" value="RIBOSOMAL_S14"/>
    <property type="match status" value="1"/>
</dbReference>
<name>RS14Z_GEOKA</name>
<reference key="1">
    <citation type="journal article" date="2004" name="Nucleic Acids Res.">
        <title>Thermoadaptation trait revealed by the genome sequence of thermophilic Geobacillus kaustophilus.</title>
        <authorList>
            <person name="Takami H."/>
            <person name="Takaki Y."/>
            <person name="Chee G.-J."/>
            <person name="Nishi S."/>
            <person name="Shimamura S."/>
            <person name="Suzuki H."/>
            <person name="Matsui S."/>
            <person name="Uchiyama I."/>
        </authorList>
    </citation>
    <scope>NUCLEOTIDE SEQUENCE [LARGE SCALE GENOMIC DNA]</scope>
    <source>
        <strain>HTA426</strain>
    </source>
</reference>
<evidence type="ECO:0000255" key="1">
    <source>
        <dbReference type="HAMAP-Rule" id="MF_01364"/>
    </source>
</evidence>
<evidence type="ECO:0000305" key="2"/>
<feature type="chain" id="PRO_0000269102" description="Small ribosomal subunit protein uS14">
    <location>
        <begin position="1"/>
        <end position="61"/>
    </location>
</feature>
<feature type="binding site" evidence="1">
    <location>
        <position position="24"/>
    </location>
    <ligand>
        <name>Zn(2+)</name>
        <dbReference type="ChEBI" id="CHEBI:29105"/>
    </ligand>
</feature>
<feature type="binding site" evidence="1">
    <location>
        <position position="27"/>
    </location>
    <ligand>
        <name>Zn(2+)</name>
        <dbReference type="ChEBI" id="CHEBI:29105"/>
    </ligand>
</feature>
<feature type="binding site" evidence="1">
    <location>
        <position position="40"/>
    </location>
    <ligand>
        <name>Zn(2+)</name>
        <dbReference type="ChEBI" id="CHEBI:29105"/>
    </ligand>
</feature>
<feature type="binding site" evidence="1">
    <location>
        <position position="43"/>
    </location>
    <ligand>
        <name>Zn(2+)</name>
        <dbReference type="ChEBI" id="CHEBI:29105"/>
    </ligand>
</feature>
<comment type="function">
    <text evidence="1">Binds 16S rRNA, required for the assembly of 30S particles and may also be responsible for determining the conformation of the 16S rRNA at the A site.</text>
</comment>
<comment type="cofactor">
    <cofactor evidence="1">
        <name>Zn(2+)</name>
        <dbReference type="ChEBI" id="CHEBI:29105"/>
    </cofactor>
    <text evidence="1">Binds 1 zinc ion per subunit.</text>
</comment>
<comment type="subunit">
    <text evidence="1">Part of the 30S ribosomal subunit. Contacts proteins S3 and S10.</text>
</comment>
<comment type="similarity">
    <text evidence="1">Belongs to the universal ribosomal protein uS14 family. Zinc-binding uS14 subfamily.</text>
</comment>
<keyword id="KW-0479">Metal-binding</keyword>
<keyword id="KW-1185">Reference proteome</keyword>
<keyword id="KW-0687">Ribonucleoprotein</keyword>
<keyword id="KW-0689">Ribosomal protein</keyword>
<keyword id="KW-0694">RNA-binding</keyword>
<keyword id="KW-0699">rRNA-binding</keyword>
<keyword id="KW-0862">Zinc</keyword>